<protein>
    <recommendedName>
        <fullName>Biotinylated protein TB7.3</fullName>
    </recommendedName>
</protein>
<keyword id="KW-0092">Biotin</keyword>
<keyword id="KW-0903">Direct protein sequencing</keyword>
<keyword id="KW-1185">Reference proteome</keyword>
<dbReference type="EMBL" id="AL123456">
    <property type="protein sequence ID" value="CCP46037.1"/>
    <property type="molecule type" value="Genomic_DNA"/>
</dbReference>
<dbReference type="PIR" id="F70596">
    <property type="entry name" value="F70596"/>
</dbReference>
<dbReference type="RefSeq" id="WP_003416887.1">
    <property type="nucleotide sequence ID" value="NZ_NVQJ01000003.1"/>
</dbReference>
<dbReference type="SMR" id="P9WPQ1"/>
<dbReference type="STRING" id="83332.Rv3221c"/>
<dbReference type="PaxDb" id="83332-Rv3221c"/>
<dbReference type="DNASU" id="888096"/>
<dbReference type="KEGG" id="mtu:Rv3221c"/>
<dbReference type="KEGG" id="mtv:RVBD_3221c"/>
<dbReference type="TubercuList" id="Rv3221c"/>
<dbReference type="eggNOG" id="COG1038">
    <property type="taxonomic scope" value="Bacteria"/>
</dbReference>
<dbReference type="InParanoid" id="P9WPQ1"/>
<dbReference type="OrthoDB" id="163546at2"/>
<dbReference type="PhylomeDB" id="P9WPQ1"/>
<dbReference type="Proteomes" id="UP000001584">
    <property type="component" value="Chromosome"/>
</dbReference>
<dbReference type="CDD" id="cd06850">
    <property type="entry name" value="biotinyl_domain"/>
    <property type="match status" value="1"/>
</dbReference>
<dbReference type="Gene3D" id="2.40.50.100">
    <property type="match status" value="1"/>
</dbReference>
<dbReference type="InterPro" id="IPR050709">
    <property type="entry name" value="Biotin_Carboxyl_Carrier/Decarb"/>
</dbReference>
<dbReference type="InterPro" id="IPR000089">
    <property type="entry name" value="Biotin_lipoyl"/>
</dbReference>
<dbReference type="InterPro" id="IPR011053">
    <property type="entry name" value="Single_hybrid_motif"/>
</dbReference>
<dbReference type="NCBIfam" id="NF004547">
    <property type="entry name" value="PRK05889.1"/>
    <property type="match status" value="1"/>
</dbReference>
<dbReference type="PANTHER" id="PTHR45266">
    <property type="entry name" value="OXALOACETATE DECARBOXYLASE ALPHA CHAIN"/>
    <property type="match status" value="1"/>
</dbReference>
<dbReference type="PANTHER" id="PTHR45266:SF3">
    <property type="entry name" value="OXALOACETATE DECARBOXYLASE ALPHA CHAIN"/>
    <property type="match status" value="1"/>
</dbReference>
<dbReference type="Pfam" id="PF00364">
    <property type="entry name" value="Biotin_lipoyl"/>
    <property type="match status" value="1"/>
</dbReference>
<dbReference type="SUPFAM" id="SSF51230">
    <property type="entry name" value="Single hybrid motif"/>
    <property type="match status" value="1"/>
</dbReference>
<dbReference type="PROSITE" id="PS50968">
    <property type="entry name" value="BIOTINYL_LIPOYL"/>
    <property type="match status" value="1"/>
</dbReference>
<reference key="1">
    <citation type="journal article" date="1998" name="Nature">
        <title>Deciphering the biology of Mycobacterium tuberculosis from the complete genome sequence.</title>
        <authorList>
            <person name="Cole S.T."/>
            <person name="Brosch R."/>
            <person name="Parkhill J."/>
            <person name="Garnier T."/>
            <person name="Churcher C.M."/>
            <person name="Harris D.E."/>
            <person name="Gordon S.V."/>
            <person name="Eiglmeier K."/>
            <person name="Gas S."/>
            <person name="Barry C.E. III"/>
            <person name="Tekaia F."/>
            <person name="Badcock K."/>
            <person name="Basham D."/>
            <person name="Brown D."/>
            <person name="Chillingworth T."/>
            <person name="Connor R."/>
            <person name="Davies R.M."/>
            <person name="Devlin K."/>
            <person name="Feltwell T."/>
            <person name="Gentles S."/>
            <person name="Hamlin N."/>
            <person name="Holroyd S."/>
            <person name="Hornsby T."/>
            <person name="Jagels K."/>
            <person name="Krogh A."/>
            <person name="McLean J."/>
            <person name="Moule S."/>
            <person name="Murphy L.D."/>
            <person name="Oliver S."/>
            <person name="Osborne J."/>
            <person name="Quail M.A."/>
            <person name="Rajandream M.A."/>
            <person name="Rogers J."/>
            <person name="Rutter S."/>
            <person name="Seeger K."/>
            <person name="Skelton S."/>
            <person name="Squares S."/>
            <person name="Squares R."/>
            <person name="Sulston J.E."/>
            <person name="Taylor K."/>
            <person name="Whitehead S."/>
            <person name="Barrell B.G."/>
        </authorList>
    </citation>
    <scope>NUCLEOTIDE SEQUENCE [LARGE SCALE GENOMIC DNA]</scope>
    <source>
        <strain>ATCC 25618 / H37Rv</strain>
    </source>
</reference>
<reference key="2">
    <citation type="journal article" date="2000" name="Infect. Immun.">
        <title>Comparative evaluation of low-molecular-mass proteins from Mycobacterium tuberculosis identifies members of the ESAT-6 family as immunodominant T-cell antigens.</title>
        <authorList>
            <person name="Skjot R.L."/>
            <person name="Oettinger T."/>
            <person name="Rosenkrands I."/>
            <person name="Ravn P."/>
            <person name="Brock I."/>
            <person name="Jacobsen S."/>
            <person name="Andersen P."/>
        </authorList>
    </citation>
    <scope>PROTEIN SEQUENCE OF 2-16</scope>
    <scope>BIOTINYLATION</scope>
</reference>
<sequence length="71" mass="7306">MAEDVRAEIVASVLEVVVNEGDQIDKGDVVVLLESMKMEIPVLAEAAGTVSKVAVSVGDVIQAGDLIAVIS</sequence>
<feature type="initiator methionine" description="Removed" evidence="3">
    <location>
        <position position="1"/>
    </location>
</feature>
<feature type="chain" id="PRO_0000146838" description="Biotinylated protein TB7.3">
    <location>
        <begin position="2"/>
        <end position="71"/>
    </location>
</feature>
<feature type="domain" description="Biotinyl-binding" evidence="2">
    <location>
        <begin position="2"/>
        <end position="71"/>
    </location>
</feature>
<feature type="modified residue" description="N6-biotinyllysine" evidence="1 2">
    <location>
        <position position="37"/>
    </location>
</feature>
<accession>P9WPQ1</accession>
<accession>L0TBW3</accession>
<accession>O05845</accession>
<accession>P0A510</accession>
<name>BTB7_MYCTU</name>
<evidence type="ECO:0000250" key="1"/>
<evidence type="ECO:0000255" key="2">
    <source>
        <dbReference type="PROSITE-ProRule" id="PRU01066"/>
    </source>
</evidence>
<evidence type="ECO:0000269" key="3">
    <source>
    </source>
</evidence>
<proteinExistence type="evidence at protein level"/>
<gene>
    <name type="ordered locus">Rv3221c</name>
    <name type="ORF">MTCY07D11.05</name>
</gene>
<organism>
    <name type="scientific">Mycobacterium tuberculosis (strain ATCC 25618 / H37Rv)</name>
    <dbReference type="NCBI Taxonomy" id="83332"/>
    <lineage>
        <taxon>Bacteria</taxon>
        <taxon>Bacillati</taxon>
        <taxon>Actinomycetota</taxon>
        <taxon>Actinomycetes</taxon>
        <taxon>Mycobacteriales</taxon>
        <taxon>Mycobacteriaceae</taxon>
        <taxon>Mycobacterium</taxon>
        <taxon>Mycobacterium tuberculosis complex</taxon>
    </lineage>
</organism>